<reference key="1">
    <citation type="journal article" date="2007" name="PLoS Genet.">
        <title>Patterns and implications of gene gain and loss in the evolution of Prochlorococcus.</title>
        <authorList>
            <person name="Kettler G.C."/>
            <person name="Martiny A.C."/>
            <person name="Huang K."/>
            <person name="Zucker J."/>
            <person name="Coleman M.L."/>
            <person name="Rodrigue S."/>
            <person name="Chen F."/>
            <person name="Lapidus A."/>
            <person name="Ferriera S."/>
            <person name="Johnson J."/>
            <person name="Steglich C."/>
            <person name="Church G.M."/>
            <person name="Richardson P."/>
            <person name="Chisholm S.W."/>
        </authorList>
    </citation>
    <scope>NUCLEOTIDE SEQUENCE [LARGE SCALE GENOMIC DNA]</scope>
    <source>
        <strain>MIT 9301</strain>
    </source>
</reference>
<organism>
    <name type="scientific">Prochlorococcus marinus (strain MIT 9301)</name>
    <dbReference type="NCBI Taxonomy" id="167546"/>
    <lineage>
        <taxon>Bacteria</taxon>
        <taxon>Bacillati</taxon>
        <taxon>Cyanobacteriota</taxon>
        <taxon>Cyanophyceae</taxon>
        <taxon>Synechococcales</taxon>
        <taxon>Prochlorococcaceae</taxon>
        <taxon>Prochlorococcus</taxon>
    </lineage>
</organism>
<keyword id="KW-0004">4Fe-4S</keyword>
<keyword id="KW-0408">Iron</keyword>
<keyword id="KW-0411">Iron-sulfur</keyword>
<keyword id="KW-0456">Lyase</keyword>
<keyword id="KW-0479">Metal-binding</keyword>
<keyword id="KW-1185">Reference proteome</keyword>
<keyword id="KW-0949">S-adenosyl-L-methionine</keyword>
<keyword id="KW-0784">Thiamine biosynthesis</keyword>
<keyword id="KW-0862">Zinc</keyword>
<protein>
    <recommendedName>
        <fullName evidence="1">Phosphomethylpyrimidine synthase</fullName>
        <ecNumber evidence="1">4.1.99.17</ecNumber>
    </recommendedName>
    <alternativeName>
        <fullName evidence="1">Hydroxymethylpyrimidine phosphate synthase</fullName>
        <shortName evidence="1">HMP-P synthase</shortName>
        <shortName evidence="1">HMP-phosphate synthase</shortName>
        <shortName evidence="1">HMPP synthase</shortName>
    </alternativeName>
    <alternativeName>
        <fullName evidence="1">Thiamine biosynthesis protein ThiC</fullName>
    </alternativeName>
</protein>
<feature type="chain" id="PRO_1000004786" description="Phosphomethylpyrimidine synthase">
    <location>
        <begin position="1"/>
        <end position="456"/>
    </location>
</feature>
<feature type="binding site" evidence="1">
    <location>
        <position position="80"/>
    </location>
    <ligand>
        <name>substrate</name>
    </ligand>
</feature>
<feature type="binding site" evidence="1">
    <location>
        <position position="109"/>
    </location>
    <ligand>
        <name>substrate</name>
    </ligand>
</feature>
<feature type="binding site" evidence="1">
    <location>
        <position position="139"/>
    </location>
    <ligand>
        <name>substrate</name>
    </ligand>
</feature>
<feature type="binding site" evidence="1">
    <location>
        <position position="175"/>
    </location>
    <ligand>
        <name>substrate</name>
    </ligand>
</feature>
<feature type="binding site" evidence="1">
    <location>
        <begin position="195"/>
        <end position="197"/>
    </location>
    <ligand>
        <name>substrate</name>
    </ligand>
</feature>
<feature type="binding site" evidence="1">
    <location>
        <begin position="236"/>
        <end position="239"/>
    </location>
    <ligand>
        <name>substrate</name>
    </ligand>
</feature>
<feature type="binding site" evidence="1">
    <location>
        <position position="275"/>
    </location>
    <ligand>
        <name>substrate</name>
    </ligand>
</feature>
<feature type="binding site" evidence="1">
    <location>
        <position position="279"/>
    </location>
    <ligand>
        <name>Zn(2+)</name>
        <dbReference type="ChEBI" id="CHEBI:29105"/>
    </ligand>
</feature>
<feature type="binding site" evidence="1">
    <location>
        <position position="302"/>
    </location>
    <ligand>
        <name>substrate</name>
    </ligand>
</feature>
<feature type="binding site" evidence="1">
    <location>
        <position position="343"/>
    </location>
    <ligand>
        <name>Zn(2+)</name>
        <dbReference type="ChEBI" id="CHEBI:29105"/>
    </ligand>
</feature>
<feature type="binding site" evidence="1">
    <location>
        <position position="423"/>
    </location>
    <ligand>
        <name>[4Fe-4S] cluster</name>
        <dbReference type="ChEBI" id="CHEBI:49883"/>
        <note>4Fe-4S-S-AdoMet</note>
    </ligand>
</feature>
<feature type="binding site" evidence="1">
    <location>
        <position position="426"/>
    </location>
    <ligand>
        <name>[4Fe-4S] cluster</name>
        <dbReference type="ChEBI" id="CHEBI:49883"/>
        <note>4Fe-4S-S-AdoMet</note>
    </ligand>
</feature>
<feature type="binding site" evidence="1">
    <location>
        <position position="431"/>
    </location>
    <ligand>
        <name>[4Fe-4S] cluster</name>
        <dbReference type="ChEBI" id="CHEBI:49883"/>
        <note>4Fe-4S-S-AdoMet</note>
    </ligand>
</feature>
<evidence type="ECO:0000255" key="1">
    <source>
        <dbReference type="HAMAP-Rule" id="MF_00089"/>
    </source>
</evidence>
<gene>
    <name evidence="1" type="primary">thiC</name>
    <name type="ordered locus">P9301_18041</name>
</gene>
<comment type="function">
    <text evidence="1">Catalyzes the synthesis of the hydroxymethylpyrimidine phosphate (HMP-P) moiety of thiamine from aminoimidazole ribotide (AIR) in a radical S-adenosyl-L-methionine (SAM)-dependent reaction.</text>
</comment>
<comment type="catalytic activity">
    <reaction evidence="1">
        <text>5-amino-1-(5-phospho-beta-D-ribosyl)imidazole + S-adenosyl-L-methionine = 4-amino-2-methyl-5-(phosphooxymethyl)pyrimidine + CO + 5'-deoxyadenosine + formate + L-methionine + 3 H(+)</text>
        <dbReference type="Rhea" id="RHEA:24840"/>
        <dbReference type="ChEBI" id="CHEBI:15378"/>
        <dbReference type="ChEBI" id="CHEBI:15740"/>
        <dbReference type="ChEBI" id="CHEBI:17245"/>
        <dbReference type="ChEBI" id="CHEBI:17319"/>
        <dbReference type="ChEBI" id="CHEBI:57844"/>
        <dbReference type="ChEBI" id="CHEBI:58354"/>
        <dbReference type="ChEBI" id="CHEBI:59789"/>
        <dbReference type="ChEBI" id="CHEBI:137981"/>
        <dbReference type="EC" id="4.1.99.17"/>
    </reaction>
</comment>
<comment type="cofactor">
    <cofactor evidence="1">
        <name>[4Fe-4S] cluster</name>
        <dbReference type="ChEBI" id="CHEBI:49883"/>
    </cofactor>
    <text evidence="1">Binds 1 [4Fe-4S] cluster per subunit. The cluster is coordinated with 3 cysteines and an exchangeable S-adenosyl-L-methionine.</text>
</comment>
<comment type="pathway">
    <text evidence="1">Cofactor biosynthesis; thiamine diphosphate biosynthesis.</text>
</comment>
<comment type="similarity">
    <text evidence="1">Belongs to the ThiC family.</text>
</comment>
<name>THIC_PROM0</name>
<dbReference type="EC" id="4.1.99.17" evidence="1"/>
<dbReference type="EMBL" id="CP000576">
    <property type="protein sequence ID" value="ABO18427.1"/>
    <property type="molecule type" value="Genomic_DNA"/>
</dbReference>
<dbReference type="RefSeq" id="WP_011863712.1">
    <property type="nucleotide sequence ID" value="NC_009091.1"/>
</dbReference>
<dbReference type="SMR" id="A3PFA2"/>
<dbReference type="STRING" id="167546.P9301_18041"/>
<dbReference type="KEGG" id="pmg:P9301_18041"/>
<dbReference type="eggNOG" id="COG0422">
    <property type="taxonomic scope" value="Bacteria"/>
</dbReference>
<dbReference type="HOGENOM" id="CLU_013181_2_1_3"/>
<dbReference type="OrthoDB" id="9805897at2"/>
<dbReference type="UniPathway" id="UPA00060"/>
<dbReference type="Proteomes" id="UP000001430">
    <property type="component" value="Chromosome"/>
</dbReference>
<dbReference type="GO" id="GO:0005829">
    <property type="term" value="C:cytosol"/>
    <property type="evidence" value="ECO:0007669"/>
    <property type="project" value="TreeGrafter"/>
</dbReference>
<dbReference type="GO" id="GO:0051539">
    <property type="term" value="F:4 iron, 4 sulfur cluster binding"/>
    <property type="evidence" value="ECO:0007669"/>
    <property type="project" value="UniProtKB-KW"/>
</dbReference>
<dbReference type="GO" id="GO:0016830">
    <property type="term" value="F:carbon-carbon lyase activity"/>
    <property type="evidence" value="ECO:0007669"/>
    <property type="project" value="InterPro"/>
</dbReference>
<dbReference type="GO" id="GO:0008270">
    <property type="term" value="F:zinc ion binding"/>
    <property type="evidence" value="ECO:0007669"/>
    <property type="project" value="UniProtKB-UniRule"/>
</dbReference>
<dbReference type="GO" id="GO:0009228">
    <property type="term" value="P:thiamine biosynthetic process"/>
    <property type="evidence" value="ECO:0007669"/>
    <property type="project" value="UniProtKB-KW"/>
</dbReference>
<dbReference type="GO" id="GO:0009229">
    <property type="term" value="P:thiamine diphosphate biosynthetic process"/>
    <property type="evidence" value="ECO:0007669"/>
    <property type="project" value="UniProtKB-UniRule"/>
</dbReference>
<dbReference type="FunFam" id="3.20.20.540:FF:000001">
    <property type="entry name" value="Phosphomethylpyrimidine synthase"/>
    <property type="match status" value="1"/>
</dbReference>
<dbReference type="Gene3D" id="6.10.250.620">
    <property type="match status" value="1"/>
</dbReference>
<dbReference type="Gene3D" id="3.20.20.540">
    <property type="entry name" value="Radical SAM ThiC family, central domain"/>
    <property type="match status" value="1"/>
</dbReference>
<dbReference type="HAMAP" id="MF_00089">
    <property type="entry name" value="ThiC"/>
    <property type="match status" value="1"/>
</dbReference>
<dbReference type="InterPro" id="IPR037509">
    <property type="entry name" value="ThiC"/>
</dbReference>
<dbReference type="InterPro" id="IPR038521">
    <property type="entry name" value="ThiC/Bza_core_dom"/>
</dbReference>
<dbReference type="InterPro" id="IPR002817">
    <property type="entry name" value="ThiC/BzaA/B"/>
</dbReference>
<dbReference type="NCBIfam" id="NF006763">
    <property type="entry name" value="PRK09284.1"/>
    <property type="match status" value="1"/>
</dbReference>
<dbReference type="NCBIfam" id="NF009895">
    <property type="entry name" value="PRK13352.1"/>
    <property type="match status" value="1"/>
</dbReference>
<dbReference type="NCBIfam" id="TIGR00190">
    <property type="entry name" value="thiC"/>
    <property type="match status" value="1"/>
</dbReference>
<dbReference type="PANTHER" id="PTHR30557:SF1">
    <property type="entry name" value="PHOSPHOMETHYLPYRIMIDINE SYNTHASE, CHLOROPLASTIC"/>
    <property type="match status" value="1"/>
</dbReference>
<dbReference type="PANTHER" id="PTHR30557">
    <property type="entry name" value="THIAMINE BIOSYNTHESIS PROTEIN THIC"/>
    <property type="match status" value="1"/>
</dbReference>
<dbReference type="Pfam" id="PF01964">
    <property type="entry name" value="ThiC_Rad_SAM"/>
    <property type="match status" value="1"/>
</dbReference>
<dbReference type="SFLD" id="SFLDF00407">
    <property type="entry name" value="phosphomethylpyrimidine_syntha"/>
    <property type="match status" value="1"/>
</dbReference>
<dbReference type="SFLD" id="SFLDG01114">
    <property type="entry name" value="phosphomethylpyrimidine_syntha"/>
    <property type="match status" value="1"/>
</dbReference>
<dbReference type="SFLD" id="SFLDS00113">
    <property type="entry name" value="Radical_SAM_Phosphomethylpyrim"/>
    <property type="match status" value="1"/>
</dbReference>
<sequence>MRSSWIKPRLGKDNVTQMNFARNGYITEEMDFVAKKENLPPSLIMEEVARGRLIIPANINHLNLEPMSIGVASRCKVNANIGASPNASDINEEVEKLKLAVKYGADTVMDLSTGGVNLDEVRQAIIQESPVPIGTVPVYQALESVHGSIDRLTEDDFLHIIEKHCQQGVDYQTIHAGLLIEHLPKVKGRITGIVSRGGGILAQWMLHHFKQNPLYTRFDDICEIFKKYDCTFSLGDSLRPGCLHDASDDAQLAELKTLGELTRRAWEHNVQVMVEGPGHVPMDQIEFNVRKQMEECSEAPFYVLGPLVTDISPGYDHISSAIGAAMAGWYGTSMLCYVTPKEHLGLPNAEDVREGLIAYKIAAHAADIARHRAGARDRDDELSHARYNFDWNKQFELSLDPERAKQYHDETLPEEIFKKAEFCSMCGPKHCPMNSKISDESLDQLKDKLEECSTSA</sequence>
<accession>A3PFA2</accession>
<proteinExistence type="inferred from homology"/>